<keyword id="KW-0285">Flavoprotein</keyword>
<keyword id="KW-0288">FMN</keyword>
<keyword id="KW-0503">Monooxygenase</keyword>
<keyword id="KW-0521">NADP</keyword>
<keyword id="KW-0560">Oxidoreductase</keyword>
<sequence>MKIGVFIPIGNNGWLISSNAPQYMPSFELNKAIVQQAEHYQFDFALSMIKLRGFGGKTEFWDHNLESFTLMAGLAAVTSRIKIYATAATLTLPPAIVARMASTIDSISNGRFGLNVVTGWQKPEYEQMGLWPGDEYFSRRYDYLSEYVEVLQDFWGTGQSDFNGEFFQMDDCRVSPQPQTPIKLICAAQSDAGMAFSAKYADYNFCFGKGVNTPTAFAPTAARLQKAAEQAGREVSSYVLFMIIADETDELARAKWESYKAGADTEALAWLTEQSGKDTQSGADTNVRQMADPTSAVNINMGTLVGSYANVAKMMDDIATVPGTEGILLTFDDFLSGIENFGQHIQPLMNSRADIVDTLPPAAREVA</sequence>
<evidence type="ECO:0000255" key="1">
    <source>
        <dbReference type="HAMAP-Rule" id="MF_01699"/>
    </source>
</evidence>
<feature type="chain" id="PRO_0000402644" description="Pyrimidine monooxygenase RutA">
    <location>
        <begin position="1"/>
        <end position="367"/>
    </location>
</feature>
<feature type="binding site" evidence="1">
    <location>
        <begin position="49"/>
        <end position="50"/>
    </location>
    <ligand>
        <name>FMN</name>
        <dbReference type="ChEBI" id="CHEBI:58210"/>
    </ligand>
</feature>
<feature type="binding site" evidence="1">
    <location>
        <position position="115"/>
    </location>
    <ligand>
        <name>FMN</name>
        <dbReference type="ChEBI" id="CHEBI:58210"/>
    </ligand>
</feature>
<feature type="binding site" evidence="1">
    <location>
        <position position="124"/>
    </location>
    <ligand>
        <name>FMN</name>
        <dbReference type="ChEBI" id="CHEBI:58210"/>
    </ligand>
</feature>
<feature type="binding site" evidence="1">
    <location>
        <begin position="140"/>
        <end position="141"/>
    </location>
    <ligand>
        <name>FMN</name>
        <dbReference type="ChEBI" id="CHEBI:58210"/>
    </ligand>
</feature>
<feature type="binding site" evidence="1">
    <location>
        <position position="190"/>
    </location>
    <ligand>
        <name>FMN</name>
        <dbReference type="ChEBI" id="CHEBI:58210"/>
    </ligand>
</feature>
<gene>
    <name evidence="1" type="primary">rutA</name>
    <name type="synonym">ssuD</name>
    <name type="ordered locus">YE1950</name>
</gene>
<accession>A1JMY1</accession>
<reference key="1">
    <citation type="journal article" date="2006" name="PLoS Genet.">
        <title>The complete genome sequence and comparative genome analysis of the high pathogenicity Yersinia enterocolitica strain 8081.</title>
        <authorList>
            <person name="Thomson N.R."/>
            <person name="Howard S."/>
            <person name="Wren B.W."/>
            <person name="Holden M.T.G."/>
            <person name="Crossman L."/>
            <person name="Challis G.L."/>
            <person name="Churcher C."/>
            <person name="Mungall K."/>
            <person name="Brooks K."/>
            <person name="Chillingworth T."/>
            <person name="Feltwell T."/>
            <person name="Abdellah Z."/>
            <person name="Hauser H."/>
            <person name="Jagels K."/>
            <person name="Maddison M."/>
            <person name="Moule S."/>
            <person name="Sanders M."/>
            <person name="Whitehead S."/>
            <person name="Quail M.A."/>
            <person name="Dougan G."/>
            <person name="Parkhill J."/>
            <person name="Prentice M.B."/>
        </authorList>
    </citation>
    <scope>NUCLEOTIDE SEQUENCE [LARGE SCALE GENOMIC DNA]</scope>
    <source>
        <strain>NCTC 13174 / 8081</strain>
    </source>
</reference>
<dbReference type="EC" id="1.14.99.46" evidence="1"/>
<dbReference type="EMBL" id="AM286415">
    <property type="protein sequence ID" value="CAL12029.1"/>
    <property type="molecule type" value="Genomic_DNA"/>
</dbReference>
<dbReference type="RefSeq" id="WP_011816250.1">
    <property type="nucleotide sequence ID" value="NC_008800.1"/>
</dbReference>
<dbReference type="RefSeq" id="YP_001006205.1">
    <property type="nucleotide sequence ID" value="NC_008800.1"/>
</dbReference>
<dbReference type="SMR" id="A1JMY1"/>
<dbReference type="KEGG" id="yen:YE1950"/>
<dbReference type="PATRIC" id="fig|393305.7.peg.2107"/>
<dbReference type="eggNOG" id="COG2141">
    <property type="taxonomic scope" value="Bacteria"/>
</dbReference>
<dbReference type="HOGENOM" id="CLU_027853_1_1_6"/>
<dbReference type="OrthoDB" id="9814695at2"/>
<dbReference type="Proteomes" id="UP000000642">
    <property type="component" value="Chromosome"/>
</dbReference>
<dbReference type="GO" id="GO:0008726">
    <property type="term" value="F:alkanesulfonate monooxygenase activity"/>
    <property type="evidence" value="ECO:0007669"/>
    <property type="project" value="TreeGrafter"/>
</dbReference>
<dbReference type="GO" id="GO:0052614">
    <property type="term" value="F:uracil oxygenase activity"/>
    <property type="evidence" value="ECO:0007669"/>
    <property type="project" value="UniProtKB-EC"/>
</dbReference>
<dbReference type="GO" id="GO:0046306">
    <property type="term" value="P:alkanesulfonate catabolic process"/>
    <property type="evidence" value="ECO:0007669"/>
    <property type="project" value="TreeGrafter"/>
</dbReference>
<dbReference type="GO" id="GO:0019740">
    <property type="term" value="P:nitrogen utilization"/>
    <property type="evidence" value="ECO:0007669"/>
    <property type="project" value="UniProtKB-UniRule"/>
</dbReference>
<dbReference type="GO" id="GO:0006212">
    <property type="term" value="P:uracil catabolic process"/>
    <property type="evidence" value="ECO:0007669"/>
    <property type="project" value="UniProtKB-UniRule"/>
</dbReference>
<dbReference type="CDD" id="cd01094">
    <property type="entry name" value="Alkanesulfonate_monoxygenase"/>
    <property type="match status" value="1"/>
</dbReference>
<dbReference type="FunFam" id="3.20.20.30:FF:000003">
    <property type="entry name" value="Pyrimidine monooxygenase RutA"/>
    <property type="match status" value="1"/>
</dbReference>
<dbReference type="Gene3D" id="3.20.20.30">
    <property type="entry name" value="Luciferase-like domain"/>
    <property type="match status" value="1"/>
</dbReference>
<dbReference type="HAMAP" id="MF_01699">
    <property type="entry name" value="RutA"/>
    <property type="match status" value="1"/>
</dbReference>
<dbReference type="InterPro" id="IPR011251">
    <property type="entry name" value="Luciferase-like_dom"/>
</dbReference>
<dbReference type="InterPro" id="IPR036661">
    <property type="entry name" value="Luciferase-like_sf"/>
</dbReference>
<dbReference type="InterPro" id="IPR019914">
    <property type="entry name" value="Pyrimidine_monooxygenase_RutA"/>
</dbReference>
<dbReference type="InterPro" id="IPR050172">
    <property type="entry name" value="SsuD_RutA_monooxygenase"/>
</dbReference>
<dbReference type="NCBIfam" id="TIGR03612">
    <property type="entry name" value="RutA"/>
    <property type="match status" value="1"/>
</dbReference>
<dbReference type="PANTHER" id="PTHR42847">
    <property type="entry name" value="ALKANESULFONATE MONOOXYGENASE"/>
    <property type="match status" value="1"/>
</dbReference>
<dbReference type="PANTHER" id="PTHR42847:SF4">
    <property type="entry name" value="ALKANESULFONATE MONOOXYGENASE-RELATED"/>
    <property type="match status" value="1"/>
</dbReference>
<dbReference type="Pfam" id="PF00296">
    <property type="entry name" value="Bac_luciferase"/>
    <property type="match status" value="1"/>
</dbReference>
<dbReference type="SUPFAM" id="SSF51679">
    <property type="entry name" value="Bacterial luciferase-like"/>
    <property type="match status" value="1"/>
</dbReference>
<organism>
    <name type="scientific">Yersinia enterocolitica serotype O:8 / biotype 1B (strain NCTC 13174 / 8081)</name>
    <dbReference type="NCBI Taxonomy" id="393305"/>
    <lineage>
        <taxon>Bacteria</taxon>
        <taxon>Pseudomonadati</taxon>
        <taxon>Pseudomonadota</taxon>
        <taxon>Gammaproteobacteria</taxon>
        <taxon>Enterobacterales</taxon>
        <taxon>Yersiniaceae</taxon>
        <taxon>Yersinia</taxon>
    </lineage>
</organism>
<proteinExistence type="inferred from homology"/>
<protein>
    <recommendedName>
        <fullName evidence="1">Pyrimidine monooxygenase RutA</fullName>
        <ecNumber evidence="1">1.14.99.46</ecNumber>
    </recommendedName>
</protein>
<name>RUTA_YERE8</name>
<comment type="function">
    <text evidence="1">Catalyzes the pyrimidine ring opening between N-3 and C-4 by an unusual flavin hydroperoxide-catalyzed mechanism, adding oxygen atoms in the process to yield ureidoacrylate peracid, that immediately reacts with FMN forming ureidoacrylate and FMN-N(5)-oxide. The FMN-N(5)-oxide reacts spontaneously with NADH to produce FMN. Requires the flavin reductase RutF to regenerate FMN in vivo.</text>
</comment>
<comment type="catalytic activity">
    <reaction evidence="1">
        <text>uracil + FMNH2 + NADH + O2 = (Z)-3-ureidoacrylate + FMN + NAD(+) + H2O + H(+)</text>
        <dbReference type="Rhea" id="RHEA:31587"/>
        <dbReference type="ChEBI" id="CHEBI:15377"/>
        <dbReference type="ChEBI" id="CHEBI:15378"/>
        <dbReference type="ChEBI" id="CHEBI:15379"/>
        <dbReference type="ChEBI" id="CHEBI:17568"/>
        <dbReference type="ChEBI" id="CHEBI:57540"/>
        <dbReference type="ChEBI" id="CHEBI:57618"/>
        <dbReference type="ChEBI" id="CHEBI:57945"/>
        <dbReference type="ChEBI" id="CHEBI:58210"/>
        <dbReference type="ChEBI" id="CHEBI:59891"/>
        <dbReference type="EC" id="1.14.99.46"/>
    </reaction>
</comment>
<comment type="catalytic activity">
    <reaction evidence="1">
        <text>thymine + FMNH2 + NADH + O2 = (Z)-2-methylureidoacrylate + FMN + NAD(+) + H2O + H(+)</text>
        <dbReference type="Rhea" id="RHEA:31599"/>
        <dbReference type="ChEBI" id="CHEBI:15377"/>
        <dbReference type="ChEBI" id="CHEBI:15378"/>
        <dbReference type="ChEBI" id="CHEBI:15379"/>
        <dbReference type="ChEBI" id="CHEBI:17821"/>
        <dbReference type="ChEBI" id="CHEBI:57540"/>
        <dbReference type="ChEBI" id="CHEBI:57618"/>
        <dbReference type="ChEBI" id="CHEBI:57945"/>
        <dbReference type="ChEBI" id="CHEBI:58210"/>
        <dbReference type="ChEBI" id="CHEBI:143783"/>
        <dbReference type="EC" id="1.14.99.46"/>
    </reaction>
</comment>
<comment type="similarity">
    <text evidence="1">Belongs to the NtaA/SnaA/DszA monooxygenase family. RutA subfamily.</text>
</comment>